<gene>
    <name type="ordered locus">Bind_1895</name>
</gene>
<evidence type="ECO:0000255" key="1">
    <source>
        <dbReference type="HAMAP-Rule" id="MF_00651"/>
    </source>
</evidence>
<keyword id="KW-0963">Cytoplasm</keyword>
<keyword id="KW-0378">Hydrolase</keyword>
<keyword id="KW-0540">Nuclease</keyword>
<keyword id="KW-1185">Reference proteome</keyword>
<keyword id="KW-0690">Ribosome biogenesis</keyword>
<reference key="1">
    <citation type="journal article" date="2010" name="J. Bacteriol.">
        <title>Complete genome sequence of Beijerinckia indica subsp. indica.</title>
        <authorList>
            <person name="Tamas I."/>
            <person name="Dedysh S.N."/>
            <person name="Liesack W."/>
            <person name="Stott M.B."/>
            <person name="Alam M."/>
            <person name="Murrell J.C."/>
            <person name="Dunfield P.F."/>
        </authorList>
    </citation>
    <scope>NUCLEOTIDE SEQUENCE [LARGE SCALE GENOMIC DNA]</scope>
    <source>
        <strain>ATCC 9039 / DSM 1715 / NCIMB 8712</strain>
    </source>
</reference>
<feature type="chain" id="PRO_1000131000" description="Putative pre-16S rRNA nuclease">
    <location>
        <begin position="1"/>
        <end position="165"/>
    </location>
</feature>
<accession>B2IEC1</accession>
<proteinExistence type="inferred from homology"/>
<protein>
    <recommendedName>
        <fullName evidence="1">Putative pre-16S rRNA nuclease</fullName>
        <ecNumber evidence="1">3.1.-.-</ecNumber>
    </recommendedName>
</protein>
<comment type="function">
    <text evidence="1">Could be a nuclease involved in processing of the 5'-end of pre-16S rRNA.</text>
</comment>
<comment type="subcellular location">
    <subcellularLocation>
        <location evidence="1">Cytoplasm</location>
    </subcellularLocation>
</comment>
<comment type="similarity">
    <text evidence="1">Belongs to the YqgF nuclease family.</text>
</comment>
<name>YQGF_BEII9</name>
<organism>
    <name type="scientific">Beijerinckia indica subsp. indica (strain ATCC 9039 / DSM 1715 / NCIMB 8712)</name>
    <dbReference type="NCBI Taxonomy" id="395963"/>
    <lineage>
        <taxon>Bacteria</taxon>
        <taxon>Pseudomonadati</taxon>
        <taxon>Pseudomonadota</taxon>
        <taxon>Alphaproteobacteria</taxon>
        <taxon>Hyphomicrobiales</taxon>
        <taxon>Beijerinckiaceae</taxon>
        <taxon>Beijerinckia</taxon>
    </lineage>
</organism>
<dbReference type="EC" id="3.1.-.-" evidence="1"/>
<dbReference type="EMBL" id="CP001016">
    <property type="protein sequence ID" value="ACB95519.1"/>
    <property type="molecule type" value="Genomic_DNA"/>
</dbReference>
<dbReference type="RefSeq" id="WP_012384876.1">
    <property type="nucleotide sequence ID" value="NC_010581.1"/>
</dbReference>
<dbReference type="SMR" id="B2IEC1"/>
<dbReference type="STRING" id="395963.Bind_1895"/>
<dbReference type="KEGG" id="bid:Bind_1895"/>
<dbReference type="eggNOG" id="COG0816">
    <property type="taxonomic scope" value="Bacteria"/>
</dbReference>
<dbReference type="HOGENOM" id="CLU_098240_1_1_5"/>
<dbReference type="OrthoDB" id="9796140at2"/>
<dbReference type="Proteomes" id="UP000001695">
    <property type="component" value="Chromosome"/>
</dbReference>
<dbReference type="GO" id="GO:0005829">
    <property type="term" value="C:cytosol"/>
    <property type="evidence" value="ECO:0007669"/>
    <property type="project" value="TreeGrafter"/>
</dbReference>
<dbReference type="GO" id="GO:0004518">
    <property type="term" value="F:nuclease activity"/>
    <property type="evidence" value="ECO:0007669"/>
    <property type="project" value="UniProtKB-KW"/>
</dbReference>
<dbReference type="GO" id="GO:0000967">
    <property type="term" value="P:rRNA 5'-end processing"/>
    <property type="evidence" value="ECO:0007669"/>
    <property type="project" value="UniProtKB-UniRule"/>
</dbReference>
<dbReference type="CDD" id="cd16964">
    <property type="entry name" value="YqgF"/>
    <property type="match status" value="1"/>
</dbReference>
<dbReference type="Gene3D" id="3.30.420.140">
    <property type="entry name" value="YqgF/RNase H-like domain"/>
    <property type="match status" value="1"/>
</dbReference>
<dbReference type="HAMAP" id="MF_00651">
    <property type="entry name" value="Nuclease_YqgF"/>
    <property type="match status" value="1"/>
</dbReference>
<dbReference type="InterPro" id="IPR012337">
    <property type="entry name" value="RNaseH-like_sf"/>
</dbReference>
<dbReference type="InterPro" id="IPR005227">
    <property type="entry name" value="YqgF"/>
</dbReference>
<dbReference type="InterPro" id="IPR006641">
    <property type="entry name" value="YqgF/RNaseH-like_dom"/>
</dbReference>
<dbReference type="InterPro" id="IPR037027">
    <property type="entry name" value="YqgF/RNaseH-like_dom_sf"/>
</dbReference>
<dbReference type="NCBIfam" id="TIGR00250">
    <property type="entry name" value="RNAse_H_YqgF"/>
    <property type="match status" value="1"/>
</dbReference>
<dbReference type="PANTHER" id="PTHR33317">
    <property type="entry name" value="POLYNUCLEOTIDYL TRANSFERASE, RIBONUCLEASE H-LIKE SUPERFAMILY PROTEIN"/>
    <property type="match status" value="1"/>
</dbReference>
<dbReference type="PANTHER" id="PTHR33317:SF4">
    <property type="entry name" value="POLYNUCLEOTIDYL TRANSFERASE, RIBONUCLEASE H-LIKE SUPERFAMILY PROTEIN"/>
    <property type="match status" value="1"/>
</dbReference>
<dbReference type="Pfam" id="PF03652">
    <property type="entry name" value="RuvX"/>
    <property type="match status" value="1"/>
</dbReference>
<dbReference type="SMART" id="SM00732">
    <property type="entry name" value="YqgFc"/>
    <property type="match status" value="1"/>
</dbReference>
<dbReference type="SUPFAM" id="SSF53098">
    <property type="entry name" value="Ribonuclease H-like"/>
    <property type="match status" value="1"/>
</dbReference>
<sequence>MATKVLPLVELKPLLGPRQRLIGIDLGTKTIGLSLSDVERRIATPLETIRRTKFTKDAERLLALADQFDVAAFVIGLPLNMDGSAGPRVQATEAFVRSLSGLTSRPFCYWDERLSTAAVTRDLIAQDASRAKRAAVVDKLAAAFILQGALDRLAWVHETADKDLP</sequence>